<sequence length="432" mass="45599">MSKIVKVIGREIIDSRGNPTVEAEVHLEGGFVGMAAAPSGASTGSREALELRDGDKSRFLGKGVTKAVGAVNGPIAQAILGKDAKDQAGIDKIMIDLDGTENKSNFGANAILAVSLANAKAAAAAKGMPLYEHIAELNGTPGKYSMPVPMMNIINGGEHADNNVDIQEFMIQPVGAKTVKEAIRMGSEVFHHLAKVLKGKGMNTAVGDEGGYAPNLGSNAEALAVIAEAVKAAGYELGKDITLAMDCAASEFYKDGKYVLAGEGNKAFTSEEFTHFLEELTKQYPIVSIEDGLDESDWDGFAYQTKVLGDKIQLVGDDLFVTNTKILKEGIEKGIANSILIKFNQIGSLTETLAAIKMAKDAGYTAVISHRSGETEDATIADLAVGTAAGQIKTGSMSRSDRVAKYNQLIRIEEALGEKAPYNGRKEIKGQA</sequence>
<accession>B5RDS5</accession>
<protein>
    <recommendedName>
        <fullName evidence="1">Enolase</fullName>
        <ecNumber evidence="1">4.2.1.11</ecNumber>
    </recommendedName>
    <alternativeName>
        <fullName evidence="1">2-phospho-D-glycerate hydro-lyase</fullName>
    </alternativeName>
    <alternativeName>
        <fullName evidence="1">2-phosphoglycerate dehydratase</fullName>
    </alternativeName>
</protein>
<keyword id="KW-0963">Cytoplasm</keyword>
<keyword id="KW-0324">Glycolysis</keyword>
<keyword id="KW-0456">Lyase</keyword>
<keyword id="KW-0460">Magnesium</keyword>
<keyword id="KW-0479">Metal-binding</keyword>
<keyword id="KW-0964">Secreted</keyword>
<feature type="chain" id="PRO_1000115909" description="Enolase">
    <location>
        <begin position="1"/>
        <end position="432"/>
    </location>
</feature>
<feature type="active site" description="Proton donor" evidence="1">
    <location>
        <position position="209"/>
    </location>
</feature>
<feature type="active site" description="Proton acceptor" evidence="1">
    <location>
        <position position="342"/>
    </location>
</feature>
<feature type="binding site" evidence="1">
    <location>
        <position position="167"/>
    </location>
    <ligand>
        <name>(2R)-2-phosphoglycerate</name>
        <dbReference type="ChEBI" id="CHEBI:58289"/>
    </ligand>
</feature>
<feature type="binding site" evidence="1">
    <location>
        <position position="246"/>
    </location>
    <ligand>
        <name>Mg(2+)</name>
        <dbReference type="ChEBI" id="CHEBI:18420"/>
    </ligand>
</feature>
<feature type="binding site" evidence="1">
    <location>
        <position position="290"/>
    </location>
    <ligand>
        <name>Mg(2+)</name>
        <dbReference type="ChEBI" id="CHEBI:18420"/>
    </ligand>
</feature>
<feature type="binding site" evidence="1">
    <location>
        <position position="317"/>
    </location>
    <ligand>
        <name>Mg(2+)</name>
        <dbReference type="ChEBI" id="CHEBI:18420"/>
    </ligand>
</feature>
<feature type="binding site" evidence="1">
    <location>
        <position position="342"/>
    </location>
    <ligand>
        <name>(2R)-2-phosphoglycerate</name>
        <dbReference type="ChEBI" id="CHEBI:58289"/>
    </ligand>
</feature>
<feature type="binding site" evidence="1">
    <location>
        <position position="371"/>
    </location>
    <ligand>
        <name>(2R)-2-phosphoglycerate</name>
        <dbReference type="ChEBI" id="CHEBI:58289"/>
    </ligand>
</feature>
<feature type="binding site" evidence="1">
    <location>
        <position position="372"/>
    </location>
    <ligand>
        <name>(2R)-2-phosphoglycerate</name>
        <dbReference type="ChEBI" id="CHEBI:58289"/>
    </ligand>
</feature>
<feature type="binding site" evidence="1">
    <location>
        <position position="393"/>
    </location>
    <ligand>
        <name>(2R)-2-phosphoglycerate</name>
        <dbReference type="ChEBI" id="CHEBI:58289"/>
    </ligand>
</feature>
<comment type="function">
    <text evidence="1">Catalyzes the reversible conversion of 2-phosphoglycerate (2-PG) into phosphoenolpyruvate (PEP). It is essential for the degradation of carbohydrates via glycolysis.</text>
</comment>
<comment type="catalytic activity">
    <reaction evidence="1">
        <text>(2R)-2-phosphoglycerate = phosphoenolpyruvate + H2O</text>
        <dbReference type="Rhea" id="RHEA:10164"/>
        <dbReference type="ChEBI" id="CHEBI:15377"/>
        <dbReference type="ChEBI" id="CHEBI:58289"/>
        <dbReference type="ChEBI" id="CHEBI:58702"/>
        <dbReference type="EC" id="4.2.1.11"/>
    </reaction>
</comment>
<comment type="cofactor">
    <cofactor evidence="1">
        <name>Mg(2+)</name>
        <dbReference type="ChEBI" id="CHEBI:18420"/>
    </cofactor>
    <text evidence="1">Binds a second Mg(2+) ion via substrate during catalysis.</text>
</comment>
<comment type="pathway">
    <text evidence="1">Carbohydrate degradation; glycolysis; pyruvate from D-glyceraldehyde 3-phosphate: step 4/5.</text>
</comment>
<comment type="subunit">
    <text evidence="1">Component of the RNA degradosome, a multiprotein complex involved in RNA processing and mRNA degradation.</text>
</comment>
<comment type="subcellular location">
    <subcellularLocation>
        <location evidence="1">Cytoplasm</location>
    </subcellularLocation>
    <subcellularLocation>
        <location evidence="1">Secreted</location>
    </subcellularLocation>
    <subcellularLocation>
        <location evidence="1">Cell surface</location>
    </subcellularLocation>
    <text evidence="1">Fractions of enolase are present in both the cytoplasm and on the cell surface.</text>
</comment>
<comment type="similarity">
    <text evidence="1">Belongs to the enolase family.</text>
</comment>
<organism>
    <name type="scientific">Salmonella gallinarum (strain 287/91 / NCTC 13346)</name>
    <dbReference type="NCBI Taxonomy" id="550538"/>
    <lineage>
        <taxon>Bacteria</taxon>
        <taxon>Pseudomonadati</taxon>
        <taxon>Pseudomonadota</taxon>
        <taxon>Gammaproteobacteria</taxon>
        <taxon>Enterobacterales</taxon>
        <taxon>Enterobacteriaceae</taxon>
        <taxon>Salmonella</taxon>
    </lineage>
</organism>
<reference key="1">
    <citation type="journal article" date="2008" name="Genome Res.">
        <title>Comparative genome analysis of Salmonella enteritidis PT4 and Salmonella gallinarum 287/91 provides insights into evolutionary and host adaptation pathways.</title>
        <authorList>
            <person name="Thomson N.R."/>
            <person name="Clayton D.J."/>
            <person name="Windhorst D."/>
            <person name="Vernikos G."/>
            <person name="Davidson S."/>
            <person name="Churcher C."/>
            <person name="Quail M.A."/>
            <person name="Stevens M."/>
            <person name="Jones M.A."/>
            <person name="Watson M."/>
            <person name="Barron A."/>
            <person name="Layton A."/>
            <person name="Pickard D."/>
            <person name="Kingsley R.A."/>
            <person name="Bignell A."/>
            <person name="Clark L."/>
            <person name="Harris B."/>
            <person name="Ormond D."/>
            <person name="Abdellah Z."/>
            <person name="Brooks K."/>
            <person name="Cherevach I."/>
            <person name="Chillingworth T."/>
            <person name="Woodward J."/>
            <person name="Norberczak H."/>
            <person name="Lord A."/>
            <person name="Arrowsmith C."/>
            <person name="Jagels K."/>
            <person name="Moule S."/>
            <person name="Mungall K."/>
            <person name="Saunders M."/>
            <person name="Whitehead S."/>
            <person name="Chabalgoity J.A."/>
            <person name="Maskell D."/>
            <person name="Humphreys T."/>
            <person name="Roberts M."/>
            <person name="Barrow P.A."/>
            <person name="Dougan G."/>
            <person name="Parkhill J."/>
        </authorList>
    </citation>
    <scope>NUCLEOTIDE SEQUENCE [LARGE SCALE GENOMIC DNA]</scope>
    <source>
        <strain>287/91 / NCTC 13346</strain>
    </source>
</reference>
<gene>
    <name evidence="1" type="primary">eno</name>
    <name type="ordered locus">SG2856</name>
</gene>
<evidence type="ECO:0000255" key="1">
    <source>
        <dbReference type="HAMAP-Rule" id="MF_00318"/>
    </source>
</evidence>
<dbReference type="EC" id="4.2.1.11" evidence="1"/>
<dbReference type="EMBL" id="AM933173">
    <property type="protein sequence ID" value="CAR38663.1"/>
    <property type="molecule type" value="Genomic_DNA"/>
</dbReference>
<dbReference type="RefSeq" id="WP_000036734.1">
    <property type="nucleotide sequence ID" value="NC_011274.1"/>
</dbReference>
<dbReference type="SMR" id="B5RDS5"/>
<dbReference type="GeneID" id="66757270"/>
<dbReference type="KEGG" id="seg:SG2856"/>
<dbReference type="HOGENOM" id="CLU_031223_2_1_6"/>
<dbReference type="UniPathway" id="UPA00109">
    <property type="reaction ID" value="UER00187"/>
</dbReference>
<dbReference type="Proteomes" id="UP000008321">
    <property type="component" value="Chromosome"/>
</dbReference>
<dbReference type="GO" id="GO:0009986">
    <property type="term" value="C:cell surface"/>
    <property type="evidence" value="ECO:0007669"/>
    <property type="project" value="UniProtKB-SubCell"/>
</dbReference>
<dbReference type="GO" id="GO:0005576">
    <property type="term" value="C:extracellular region"/>
    <property type="evidence" value="ECO:0007669"/>
    <property type="project" value="UniProtKB-SubCell"/>
</dbReference>
<dbReference type="GO" id="GO:0000015">
    <property type="term" value="C:phosphopyruvate hydratase complex"/>
    <property type="evidence" value="ECO:0007669"/>
    <property type="project" value="InterPro"/>
</dbReference>
<dbReference type="GO" id="GO:0000287">
    <property type="term" value="F:magnesium ion binding"/>
    <property type="evidence" value="ECO:0007669"/>
    <property type="project" value="UniProtKB-UniRule"/>
</dbReference>
<dbReference type="GO" id="GO:0004634">
    <property type="term" value="F:phosphopyruvate hydratase activity"/>
    <property type="evidence" value="ECO:0007669"/>
    <property type="project" value="UniProtKB-UniRule"/>
</dbReference>
<dbReference type="GO" id="GO:0006096">
    <property type="term" value="P:glycolytic process"/>
    <property type="evidence" value="ECO:0007669"/>
    <property type="project" value="UniProtKB-UniRule"/>
</dbReference>
<dbReference type="CDD" id="cd03313">
    <property type="entry name" value="enolase"/>
    <property type="match status" value="1"/>
</dbReference>
<dbReference type="FunFam" id="3.20.20.120:FF:000001">
    <property type="entry name" value="Enolase"/>
    <property type="match status" value="1"/>
</dbReference>
<dbReference type="FunFam" id="3.30.390.10:FF:000001">
    <property type="entry name" value="Enolase"/>
    <property type="match status" value="1"/>
</dbReference>
<dbReference type="Gene3D" id="3.20.20.120">
    <property type="entry name" value="Enolase-like C-terminal domain"/>
    <property type="match status" value="1"/>
</dbReference>
<dbReference type="Gene3D" id="3.30.390.10">
    <property type="entry name" value="Enolase-like, N-terminal domain"/>
    <property type="match status" value="1"/>
</dbReference>
<dbReference type="HAMAP" id="MF_00318">
    <property type="entry name" value="Enolase"/>
    <property type="match status" value="1"/>
</dbReference>
<dbReference type="InterPro" id="IPR000941">
    <property type="entry name" value="Enolase"/>
</dbReference>
<dbReference type="InterPro" id="IPR036849">
    <property type="entry name" value="Enolase-like_C_sf"/>
</dbReference>
<dbReference type="InterPro" id="IPR029017">
    <property type="entry name" value="Enolase-like_N"/>
</dbReference>
<dbReference type="InterPro" id="IPR020810">
    <property type="entry name" value="Enolase_C"/>
</dbReference>
<dbReference type="InterPro" id="IPR020809">
    <property type="entry name" value="Enolase_CS"/>
</dbReference>
<dbReference type="InterPro" id="IPR020811">
    <property type="entry name" value="Enolase_N"/>
</dbReference>
<dbReference type="NCBIfam" id="TIGR01060">
    <property type="entry name" value="eno"/>
    <property type="match status" value="1"/>
</dbReference>
<dbReference type="PANTHER" id="PTHR11902">
    <property type="entry name" value="ENOLASE"/>
    <property type="match status" value="1"/>
</dbReference>
<dbReference type="PANTHER" id="PTHR11902:SF1">
    <property type="entry name" value="ENOLASE"/>
    <property type="match status" value="1"/>
</dbReference>
<dbReference type="Pfam" id="PF00113">
    <property type="entry name" value="Enolase_C"/>
    <property type="match status" value="1"/>
</dbReference>
<dbReference type="Pfam" id="PF03952">
    <property type="entry name" value="Enolase_N"/>
    <property type="match status" value="1"/>
</dbReference>
<dbReference type="PIRSF" id="PIRSF001400">
    <property type="entry name" value="Enolase"/>
    <property type="match status" value="1"/>
</dbReference>
<dbReference type="PRINTS" id="PR00148">
    <property type="entry name" value="ENOLASE"/>
</dbReference>
<dbReference type="SFLD" id="SFLDF00002">
    <property type="entry name" value="enolase"/>
    <property type="match status" value="1"/>
</dbReference>
<dbReference type="SFLD" id="SFLDG00178">
    <property type="entry name" value="enolase"/>
    <property type="match status" value="1"/>
</dbReference>
<dbReference type="SMART" id="SM01192">
    <property type="entry name" value="Enolase_C"/>
    <property type="match status" value="1"/>
</dbReference>
<dbReference type="SMART" id="SM01193">
    <property type="entry name" value="Enolase_N"/>
    <property type="match status" value="1"/>
</dbReference>
<dbReference type="SUPFAM" id="SSF51604">
    <property type="entry name" value="Enolase C-terminal domain-like"/>
    <property type="match status" value="1"/>
</dbReference>
<dbReference type="SUPFAM" id="SSF54826">
    <property type="entry name" value="Enolase N-terminal domain-like"/>
    <property type="match status" value="1"/>
</dbReference>
<dbReference type="PROSITE" id="PS00164">
    <property type="entry name" value="ENOLASE"/>
    <property type="match status" value="1"/>
</dbReference>
<proteinExistence type="inferred from homology"/>
<name>ENO_SALG2</name>